<comment type="similarity">
    <text evidence="1">Belongs to the UPF0178 family.</text>
</comment>
<accession>B7ILR6</accession>
<gene>
    <name type="ordered locus">BCG9842_B2187</name>
</gene>
<protein>
    <recommendedName>
        <fullName evidence="1">UPF0178 protein BCG9842_B2187</fullName>
    </recommendedName>
</protein>
<dbReference type="EMBL" id="CP001186">
    <property type="protein sequence ID" value="ACK93258.1"/>
    <property type="molecule type" value="Genomic_DNA"/>
</dbReference>
<dbReference type="RefSeq" id="WP_000708771.1">
    <property type="nucleotide sequence ID" value="NC_011772.1"/>
</dbReference>
<dbReference type="SMR" id="B7ILR6"/>
<dbReference type="KEGG" id="bcg:BCG9842_B2187"/>
<dbReference type="HOGENOM" id="CLU_106619_0_0_9"/>
<dbReference type="Proteomes" id="UP000006744">
    <property type="component" value="Chromosome"/>
</dbReference>
<dbReference type="HAMAP" id="MF_00489">
    <property type="entry name" value="UPF0178"/>
    <property type="match status" value="1"/>
</dbReference>
<dbReference type="InterPro" id="IPR003791">
    <property type="entry name" value="UPF0178"/>
</dbReference>
<dbReference type="NCBIfam" id="NF001095">
    <property type="entry name" value="PRK00124.1"/>
    <property type="match status" value="1"/>
</dbReference>
<dbReference type="PANTHER" id="PTHR35146">
    <property type="entry name" value="UPF0178 PROTEIN YAII"/>
    <property type="match status" value="1"/>
</dbReference>
<dbReference type="PANTHER" id="PTHR35146:SF1">
    <property type="entry name" value="UPF0178 PROTEIN YAII"/>
    <property type="match status" value="1"/>
</dbReference>
<dbReference type="Pfam" id="PF02639">
    <property type="entry name" value="DUF188"/>
    <property type="match status" value="1"/>
</dbReference>
<proteinExistence type="inferred from homology"/>
<evidence type="ECO:0000255" key="1">
    <source>
        <dbReference type="HAMAP-Rule" id="MF_00489"/>
    </source>
</evidence>
<organism>
    <name type="scientific">Bacillus cereus (strain G9842)</name>
    <dbReference type="NCBI Taxonomy" id="405531"/>
    <lineage>
        <taxon>Bacteria</taxon>
        <taxon>Bacillati</taxon>
        <taxon>Bacillota</taxon>
        <taxon>Bacilli</taxon>
        <taxon>Bacillales</taxon>
        <taxon>Bacillaceae</taxon>
        <taxon>Bacillus</taxon>
        <taxon>Bacillus cereus group</taxon>
    </lineage>
</organism>
<name>Y2187_BACC2</name>
<feature type="chain" id="PRO_1000126173" description="UPF0178 protein BCG9842_B2187">
    <location>
        <begin position="1"/>
        <end position="146"/>
    </location>
</feature>
<sequence length="146" mass="16348">MKIYVDADACPVKDVIIFEATNVEIPVTLVTSFSHYSNAEQPKGVETIYVDSGADAADYRIMQLAKKEDLIVTQDYGLASLALAKGCIVLHHKGYKYTNDNIEQLLQTRYLSAMVRKSGKRTKGPKPFTAEDKEKFRALFKSMIAH</sequence>
<reference key="1">
    <citation type="submission" date="2008-10" db="EMBL/GenBank/DDBJ databases">
        <title>Genome sequence of Bacillus cereus G9842.</title>
        <authorList>
            <person name="Dodson R.J."/>
            <person name="Durkin A.S."/>
            <person name="Rosovitz M.J."/>
            <person name="Rasko D.A."/>
            <person name="Hoffmaster A."/>
            <person name="Ravel J."/>
            <person name="Sutton G."/>
        </authorList>
    </citation>
    <scope>NUCLEOTIDE SEQUENCE [LARGE SCALE GENOMIC DNA]</scope>
    <source>
        <strain>G9842</strain>
    </source>
</reference>